<gene>
    <name type="primary">AUX22C</name>
    <name type="synonym">ARG12</name>
</gene>
<dbReference type="EMBL" id="AB004931">
    <property type="protein sequence ID" value="BAA20847.1"/>
    <property type="molecule type" value="mRNA"/>
</dbReference>
<dbReference type="PIR" id="T10859">
    <property type="entry name" value="T10859"/>
</dbReference>
<dbReference type="SMR" id="O24541"/>
<dbReference type="STRING" id="3916.O24541"/>
<dbReference type="Proteomes" id="UP000087766">
    <property type="component" value="Unplaced"/>
</dbReference>
<dbReference type="GO" id="GO:0005634">
    <property type="term" value="C:nucleus"/>
    <property type="evidence" value="ECO:0007669"/>
    <property type="project" value="UniProtKB-SubCell"/>
</dbReference>
<dbReference type="GO" id="GO:0009734">
    <property type="term" value="P:auxin-activated signaling pathway"/>
    <property type="evidence" value="ECO:0007669"/>
    <property type="project" value="UniProtKB-KW"/>
</dbReference>
<dbReference type="GO" id="GO:0006355">
    <property type="term" value="P:regulation of DNA-templated transcription"/>
    <property type="evidence" value="ECO:0007669"/>
    <property type="project" value="InterPro"/>
</dbReference>
<dbReference type="FunFam" id="3.10.20.90:FF:000078">
    <property type="entry name" value="Auxin-responsive protein"/>
    <property type="match status" value="1"/>
</dbReference>
<dbReference type="Gene3D" id="3.10.20.90">
    <property type="entry name" value="Phosphatidylinositol 3-kinase Catalytic Subunit, Chain A, domain 1"/>
    <property type="match status" value="1"/>
</dbReference>
<dbReference type="InterPro" id="IPR033389">
    <property type="entry name" value="AUX/IAA_dom"/>
</dbReference>
<dbReference type="InterPro" id="IPR003311">
    <property type="entry name" value="AUX_IAA"/>
</dbReference>
<dbReference type="InterPro" id="IPR053793">
    <property type="entry name" value="PB1-like"/>
</dbReference>
<dbReference type="PANTHER" id="PTHR31734">
    <property type="entry name" value="AUXIN-RESPONSIVE PROTEIN IAA17"/>
    <property type="match status" value="1"/>
</dbReference>
<dbReference type="PANTHER" id="PTHR31734:SF87">
    <property type="entry name" value="AUXIN-RESPONSIVE PROTEIN IAA5"/>
    <property type="match status" value="1"/>
</dbReference>
<dbReference type="Pfam" id="PF02309">
    <property type="entry name" value="AUX_IAA"/>
    <property type="match status" value="1"/>
</dbReference>
<dbReference type="SUPFAM" id="SSF54277">
    <property type="entry name" value="CAD &amp; PB1 domains"/>
    <property type="match status" value="1"/>
</dbReference>
<dbReference type="PROSITE" id="PS51745">
    <property type="entry name" value="PB1"/>
    <property type="match status" value="1"/>
</dbReference>
<evidence type="ECO:0000250" key="1"/>
<evidence type="ECO:0000255" key="2">
    <source>
        <dbReference type="PROSITE-ProRule" id="PRU01081"/>
    </source>
</evidence>
<evidence type="ECO:0000256" key="3">
    <source>
        <dbReference type="SAM" id="MobiDB-lite"/>
    </source>
</evidence>
<evidence type="ECO:0000305" key="4"/>
<organism>
    <name type="scientific">Vigna radiata var. radiata</name>
    <name type="common">Mung bean</name>
    <name type="synonym">Phaseolus aureus</name>
    <dbReference type="NCBI Taxonomy" id="3916"/>
    <lineage>
        <taxon>Eukaryota</taxon>
        <taxon>Viridiplantae</taxon>
        <taxon>Streptophyta</taxon>
        <taxon>Embryophyta</taxon>
        <taxon>Tracheophyta</taxon>
        <taxon>Spermatophyta</taxon>
        <taxon>Magnoliopsida</taxon>
        <taxon>eudicotyledons</taxon>
        <taxon>Gunneridae</taxon>
        <taxon>Pentapetalae</taxon>
        <taxon>rosids</taxon>
        <taxon>fabids</taxon>
        <taxon>Fabales</taxon>
        <taxon>Fabaceae</taxon>
        <taxon>Papilionoideae</taxon>
        <taxon>50 kb inversion clade</taxon>
        <taxon>NPAAA clade</taxon>
        <taxon>indigoferoid/millettioid clade</taxon>
        <taxon>Phaseoleae</taxon>
        <taxon>Vigna</taxon>
    </lineage>
</organism>
<keyword id="KW-0927">Auxin signaling pathway</keyword>
<keyword id="KW-0539">Nucleus</keyword>
<keyword id="KW-1185">Reference proteome</keyword>
<keyword id="KW-0678">Repressor</keyword>
<keyword id="KW-0804">Transcription</keyword>
<keyword id="KW-0805">Transcription regulation</keyword>
<comment type="function">
    <text evidence="1">Aux/IAA proteins are short-lived transcriptional factors that function as repressors of early auxin response genes at low auxin concentrations. Repression is thought to result from the interaction with auxin response factors (ARFs), proteins that bind to the auxin-responsive promoter element (AuxRE). Formation of heterodimers with ARF proteins may alter their ability to modulate early auxin response genes expression (By similarity).</text>
</comment>
<comment type="subunit">
    <text evidence="1">Homodimers and heterodimers.</text>
</comment>
<comment type="subcellular location">
    <subcellularLocation>
        <location evidence="1">Nucleus</location>
    </subcellularLocation>
</comment>
<comment type="induction">
    <text>By auxin.</text>
</comment>
<comment type="domain">
    <text evidence="1">The N-terminal half of the protein contains two conserved domains I and II. Domain I includes a slightly degenerated ERF-associated amphiphilic repression (EAR) motif which seems to be involved in the activity of transcriptional repression. Domain II is required for the correct degradation of the protein through the SCF-mediated ubiquitin-proteasome pathway. Interactions between Aux/IAA proteins and auxin response factors (ARFs) occur through their C-terminal dimerization domains III and IV (By similarity).</text>
</comment>
<comment type="similarity">
    <text evidence="4">Belongs to the Aux/IAA family.</text>
</comment>
<name>AX22C_VIGRR</name>
<feature type="chain" id="PRO_0000112865" description="Auxin-induced protein 22C">
    <location>
        <begin position="1"/>
        <end position="188"/>
    </location>
</feature>
<feature type="domain" description="PB1" evidence="2">
    <location>
        <begin position="79"/>
        <end position="167"/>
    </location>
</feature>
<feature type="region of interest" description="Disordered" evidence="3">
    <location>
        <begin position="16"/>
        <end position="57"/>
    </location>
</feature>
<feature type="short sequence motif" description="EAR-like (transcriptional repression)">
    <location>
        <begin position="13"/>
        <end position="17"/>
    </location>
</feature>
<sequence length="188" mass="21273">MEKEDLGLEITELRLGLPGAGGENNTDKDKNKNKKRVFSDIEGENSSSEEDGKKETKNQVVGWPPVCSYRKKNTVNEPKLYVKVSMDGAPFLRKIDLAMHKGYSDLAFALDKFFGCYGICEALKDAENAEHVPIYEDKDGDWMLVGDVPWEMFRESCKRLRIMKRSDAKGFDLQPKGSLKGFIEGVRK</sequence>
<accession>O24541</accession>
<proteinExistence type="evidence at transcript level"/>
<reference key="1">
    <citation type="online journal article" date="1997" name="Plant Gene Register">
        <title>Three more members of the Aux/IAA gene family from mung bean (Vigna radiata) hypocotyl.</title>
        <authorList>
            <person name="Hashimoto H."/>
            <person name="Yamamoto K.T."/>
        </authorList>
        <locator>PGR97-137</locator>
    </citation>
    <scope>NUCLEOTIDE SEQUENCE [MRNA]</scope>
    <source>
        <tissue>Hypocotyl</tissue>
    </source>
</reference>
<protein>
    <recommendedName>
        <fullName>Auxin-induced protein 22C</fullName>
    </recommendedName>
    <alternativeName>
        <fullName>Indole-3-acetic acid-induced protein ARG12</fullName>
    </alternativeName>
</protein>